<dbReference type="EMBL" id="AY279114">
    <property type="protein sequence ID" value="AAQ18222.1"/>
    <property type="molecule type" value="Genomic_DNA"/>
</dbReference>
<dbReference type="SMR" id="Q6WN25"/>
<dbReference type="GO" id="GO:0072562">
    <property type="term" value="C:blood microparticle"/>
    <property type="evidence" value="ECO:0007669"/>
    <property type="project" value="TreeGrafter"/>
</dbReference>
<dbReference type="GO" id="GO:0031838">
    <property type="term" value="C:haptoglobin-hemoglobin complex"/>
    <property type="evidence" value="ECO:0007669"/>
    <property type="project" value="TreeGrafter"/>
</dbReference>
<dbReference type="GO" id="GO:0005833">
    <property type="term" value="C:hemoglobin complex"/>
    <property type="evidence" value="ECO:0007669"/>
    <property type="project" value="InterPro"/>
</dbReference>
<dbReference type="GO" id="GO:0031720">
    <property type="term" value="F:haptoglobin binding"/>
    <property type="evidence" value="ECO:0007669"/>
    <property type="project" value="TreeGrafter"/>
</dbReference>
<dbReference type="GO" id="GO:0020037">
    <property type="term" value="F:heme binding"/>
    <property type="evidence" value="ECO:0007669"/>
    <property type="project" value="InterPro"/>
</dbReference>
<dbReference type="GO" id="GO:0031721">
    <property type="term" value="F:hemoglobin alpha binding"/>
    <property type="evidence" value="ECO:0007669"/>
    <property type="project" value="TreeGrafter"/>
</dbReference>
<dbReference type="GO" id="GO:0046872">
    <property type="term" value="F:metal ion binding"/>
    <property type="evidence" value="ECO:0007669"/>
    <property type="project" value="UniProtKB-KW"/>
</dbReference>
<dbReference type="GO" id="GO:0043177">
    <property type="term" value="F:organic acid binding"/>
    <property type="evidence" value="ECO:0007669"/>
    <property type="project" value="TreeGrafter"/>
</dbReference>
<dbReference type="GO" id="GO:0019825">
    <property type="term" value="F:oxygen binding"/>
    <property type="evidence" value="ECO:0007669"/>
    <property type="project" value="InterPro"/>
</dbReference>
<dbReference type="GO" id="GO:0005344">
    <property type="term" value="F:oxygen carrier activity"/>
    <property type="evidence" value="ECO:0007669"/>
    <property type="project" value="UniProtKB-KW"/>
</dbReference>
<dbReference type="GO" id="GO:0004601">
    <property type="term" value="F:peroxidase activity"/>
    <property type="evidence" value="ECO:0007669"/>
    <property type="project" value="TreeGrafter"/>
</dbReference>
<dbReference type="GO" id="GO:0042744">
    <property type="term" value="P:hydrogen peroxide catabolic process"/>
    <property type="evidence" value="ECO:0007669"/>
    <property type="project" value="TreeGrafter"/>
</dbReference>
<dbReference type="CDD" id="cd08925">
    <property type="entry name" value="Hb-beta-like"/>
    <property type="match status" value="1"/>
</dbReference>
<dbReference type="FunFam" id="1.10.490.10:FF:000001">
    <property type="entry name" value="Hemoglobin subunit beta"/>
    <property type="match status" value="1"/>
</dbReference>
<dbReference type="Gene3D" id="1.10.490.10">
    <property type="entry name" value="Globins"/>
    <property type="match status" value="1"/>
</dbReference>
<dbReference type="InterPro" id="IPR000971">
    <property type="entry name" value="Globin"/>
</dbReference>
<dbReference type="InterPro" id="IPR009050">
    <property type="entry name" value="Globin-like_sf"/>
</dbReference>
<dbReference type="InterPro" id="IPR012292">
    <property type="entry name" value="Globin/Proto"/>
</dbReference>
<dbReference type="InterPro" id="IPR002337">
    <property type="entry name" value="Hemoglobin_b"/>
</dbReference>
<dbReference type="InterPro" id="IPR050056">
    <property type="entry name" value="Hemoglobin_oxygen_transport"/>
</dbReference>
<dbReference type="PANTHER" id="PTHR11442">
    <property type="entry name" value="HEMOGLOBIN FAMILY MEMBER"/>
    <property type="match status" value="1"/>
</dbReference>
<dbReference type="PANTHER" id="PTHR11442:SF42">
    <property type="entry name" value="HEMOGLOBIN SUBUNIT BETA"/>
    <property type="match status" value="1"/>
</dbReference>
<dbReference type="Pfam" id="PF00042">
    <property type="entry name" value="Globin"/>
    <property type="match status" value="1"/>
</dbReference>
<dbReference type="PRINTS" id="PR00814">
    <property type="entry name" value="BETAHAEM"/>
</dbReference>
<dbReference type="SUPFAM" id="SSF46458">
    <property type="entry name" value="Globin-like"/>
    <property type="match status" value="1"/>
</dbReference>
<dbReference type="PROSITE" id="PS01033">
    <property type="entry name" value="GLOBIN"/>
    <property type="match status" value="1"/>
</dbReference>
<proteinExistence type="evidence at transcript level"/>
<reference key="1">
    <citation type="submission" date="2003-04" db="EMBL/GenBank/DDBJ databases">
        <title>The molecular evolution of the primate beta globin gene: an evaluation of gene conversion and phylogeny and an analysis of phylogenetic footprints in noncoding DNA.</title>
        <authorList>
            <person name="Prychitko T.M."/>
            <person name="Goodman M."/>
            <person name="Johnson R.M."/>
        </authorList>
    </citation>
    <scope>NUCLEOTIDE SEQUENCE [GENOMIC DNA]</scope>
</reference>
<organism>
    <name type="scientific">Lagothrix lagotricha</name>
    <name type="common">Brown woolly monkey</name>
    <name type="synonym">Humboldt's woolly monkey</name>
    <dbReference type="NCBI Taxonomy" id="9519"/>
    <lineage>
        <taxon>Eukaryota</taxon>
        <taxon>Metazoa</taxon>
        <taxon>Chordata</taxon>
        <taxon>Craniata</taxon>
        <taxon>Vertebrata</taxon>
        <taxon>Euteleostomi</taxon>
        <taxon>Mammalia</taxon>
        <taxon>Eutheria</taxon>
        <taxon>Euarchontoglires</taxon>
        <taxon>Primates</taxon>
        <taxon>Haplorrhini</taxon>
        <taxon>Platyrrhini</taxon>
        <taxon>Atelidae</taxon>
        <taxon>Atelinae</taxon>
        <taxon>Lagothrix</taxon>
    </lineage>
</organism>
<name>HBB_LAGLA</name>
<evidence type="ECO:0000250" key="1">
    <source>
        <dbReference type="UniProtKB" id="P02086"/>
    </source>
</evidence>
<evidence type="ECO:0000250" key="2">
    <source>
        <dbReference type="UniProtKB" id="P68871"/>
    </source>
</evidence>
<evidence type="ECO:0000255" key="3">
    <source>
        <dbReference type="PROSITE-ProRule" id="PRU00238"/>
    </source>
</evidence>
<keyword id="KW-0007">Acetylation</keyword>
<keyword id="KW-0349">Heme</keyword>
<keyword id="KW-0408">Iron</keyword>
<keyword id="KW-0479">Metal-binding</keyword>
<keyword id="KW-0561">Oxygen transport</keyword>
<keyword id="KW-0597">Phosphoprotein</keyword>
<keyword id="KW-0702">S-nitrosylation</keyword>
<keyword id="KW-0813">Transport</keyword>
<protein>
    <recommendedName>
        <fullName>Hemoglobin subunit beta</fullName>
    </recommendedName>
    <alternativeName>
        <fullName>Beta-globin</fullName>
    </alternativeName>
    <alternativeName>
        <fullName>Hemoglobin beta chain</fullName>
    </alternativeName>
</protein>
<gene>
    <name type="primary">HBB</name>
</gene>
<accession>Q6WN25</accession>
<feature type="initiator methionine" description="Removed" evidence="1">
    <location>
        <position position="1"/>
    </location>
</feature>
<feature type="chain" id="PRO_0000052979" description="Hemoglobin subunit beta">
    <location>
        <begin position="2"/>
        <end position="147"/>
    </location>
</feature>
<feature type="domain" description="Globin" evidence="3">
    <location>
        <begin position="3"/>
        <end position="147"/>
    </location>
</feature>
<feature type="binding site" description="distal binding residue">
    <location>
        <position position="64"/>
    </location>
    <ligand>
        <name>heme b</name>
        <dbReference type="ChEBI" id="CHEBI:60344"/>
    </ligand>
    <ligandPart>
        <name>Fe</name>
        <dbReference type="ChEBI" id="CHEBI:18248"/>
    </ligandPart>
</feature>
<feature type="binding site" description="proximal binding residue">
    <location>
        <position position="93"/>
    </location>
    <ligand>
        <name>heme b</name>
        <dbReference type="ChEBI" id="CHEBI:60344"/>
    </ligand>
    <ligandPart>
        <name>Fe</name>
        <dbReference type="ChEBI" id="CHEBI:18248"/>
    </ligandPart>
</feature>
<feature type="modified residue" description="N-acetylvaline" evidence="1">
    <location>
        <position position="2"/>
    </location>
</feature>
<feature type="modified residue" description="Phosphothreonine" evidence="2">
    <location>
        <position position="13"/>
    </location>
</feature>
<feature type="modified residue" description="Phosphoserine" evidence="2">
    <location>
        <position position="45"/>
    </location>
</feature>
<feature type="modified residue" description="N6-acetyllysine" evidence="2">
    <location>
        <position position="60"/>
    </location>
</feature>
<feature type="modified residue" description="N6-acetyllysine" evidence="2">
    <location>
        <position position="83"/>
    </location>
</feature>
<feature type="modified residue" description="S-nitrosocysteine" evidence="2">
    <location>
        <position position="94"/>
    </location>
</feature>
<feature type="modified residue" description="N6-acetyllysine" evidence="2">
    <location>
        <position position="145"/>
    </location>
</feature>
<comment type="function">
    <text>Involved in oxygen transport from the lung to the various peripheral tissues.</text>
</comment>
<comment type="subunit">
    <text>Heterotetramer of two alpha chains and two beta chains.</text>
</comment>
<comment type="tissue specificity">
    <text>Red blood cells.</text>
</comment>
<comment type="similarity">
    <text evidence="3">Belongs to the globin family.</text>
</comment>
<sequence>MVHLTGEEKAAVTALWGKVNVDEVGGEALGRLLVVYPWTQRFFDSFGDLSTPDAVMSNPKVKAHGKKVLGAFSDGLAHLDNLKGTFAQLSELHCDKLHVDPENFRLLGNVLVCVLAHHFGKEFTPQVQAAYQKVVAGVANALAHKYH</sequence>